<comment type="function">
    <text evidence="1">Molecular chaperone. Has ATPase activity.</text>
</comment>
<comment type="subunit">
    <text evidence="1">Homodimer.</text>
</comment>
<comment type="subcellular location">
    <subcellularLocation>
        <location evidence="1">Cytoplasm</location>
    </subcellularLocation>
</comment>
<comment type="similarity">
    <text evidence="1">Belongs to the heat shock protein 90 family.</text>
</comment>
<dbReference type="EMBL" id="CP000668">
    <property type="protein sequence ID" value="ABP41117.1"/>
    <property type="molecule type" value="Genomic_DNA"/>
</dbReference>
<dbReference type="SMR" id="A4TPA5"/>
<dbReference type="KEGG" id="ypp:YPDSF_2755"/>
<dbReference type="GO" id="GO:0005737">
    <property type="term" value="C:cytoplasm"/>
    <property type="evidence" value="ECO:0007669"/>
    <property type="project" value="UniProtKB-SubCell"/>
</dbReference>
<dbReference type="GO" id="GO:0005524">
    <property type="term" value="F:ATP binding"/>
    <property type="evidence" value="ECO:0007669"/>
    <property type="project" value="UniProtKB-UniRule"/>
</dbReference>
<dbReference type="GO" id="GO:0016887">
    <property type="term" value="F:ATP hydrolysis activity"/>
    <property type="evidence" value="ECO:0007669"/>
    <property type="project" value="InterPro"/>
</dbReference>
<dbReference type="GO" id="GO:0140662">
    <property type="term" value="F:ATP-dependent protein folding chaperone"/>
    <property type="evidence" value="ECO:0007669"/>
    <property type="project" value="InterPro"/>
</dbReference>
<dbReference type="GO" id="GO:0051082">
    <property type="term" value="F:unfolded protein binding"/>
    <property type="evidence" value="ECO:0007669"/>
    <property type="project" value="UniProtKB-UniRule"/>
</dbReference>
<dbReference type="CDD" id="cd16927">
    <property type="entry name" value="HATPase_Hsp90-like"/>
    <property type="match status" value="1"/>
</dbReference>
<dbReference type="FunFam" id="1.20.120.790:FF:000002">
    <property type="entry name" value="Molecular chaperone HtpG"/>
    <property type="match status" value="1"/>
</dbReference>
<dbReference type="FunFam" id="3.30.230.80:FF:000002">
    <property type="entry name" value="Molecular chaperone HtpG"/>
    <property type="match status" value="1"/>
</dbReference>
<dbReference type="FunFam" id="3.30.565.10:FF:000009">
    <property type="entry name" value="Molecular chaperone HtpG"/>
    <property type="match status" value="1"/>
</dbReference>
<dbReference type="FunFam" id="3.40.50.11260:FF:000002">
    <property type="entry name" value="Molecular chaperone HtpG"/>
    <property type="match status" value="1"/>
</dbReference>
<dbReference type="Gene3D" id="3.30.230.80">
    <property type="match status" value="1"/>
</dbReference>
<dbReference type="Gene3D" id="3.40.50.11260">
    <property type="match status" value="1"/>
</dbReference>
<dbReference type="Gene3D" id="1.20.120.790">
    <property type="entry name" value="Heat shock protein 90, C-terminal domain"/>
    <property type="match status" value="1"/>
</dbReference>
<dbReference type="Gene3D" id="3.30.565.10">
    <property type="entry name" value="Histidine kinase-like ATPase, C-terminal domain"/>
    <property type="match status" value="1"/>
</dbReference>
<dbReference type="HAMAP" id="MF_00505">
    <property type="entry name" value="HSP90"/>
    <property type="match status" value="1"/>
</dbReference>
<dbReference type="InterPro" id="IPR036890">
    <property type="entry name" value="HATPase_C_sf"/>
</dbReference>
<dbReference type="InterPro" id="IPR019805">
    <property type="entry name" value="Heat_shock_protein_90_CS"/>
</dbReference>
<dbReference type="InterPro" id="IPR037196">
    <property type="entry name" value="HSP90_C"/>
</dbReference>
<dbReference type="InterPro" id="IPR001404">
    <property type="entry name" value="Hsp90_fam"/>
</dbReference>
<dbReference type="InterPro" id="IPR020575">
    <property type="entry name" value="Hsp90_N"/>
</dbReference>
<dbReference type="InterPro" id="IPR020568">
    <property type="entry name" value="Ribosomal_Su5_D2-typ_SF"/>
</dbReference>
<dbReference type="NCBIfam" id="NF003555">
    <property type="entry name" value="PRK05218.1"/>
    <property type="match status" value="1"/>
</dbReference>
<dbReference type="PANTHER" id="PTHR11528">
    <property type="entry name" value="HEAT SHOCK PROTEIN 90 FAMILY MEMBER"/>
    <property type="match status" value="1"/>
</dbReference>
<dbReference type="Pfam" id="PF13589">
    <property type="entry name" value="HATPase_c_3"/>
    <property type="match status" value="1"/>
</dbReference>
<dbReference type="Pfam" id="PF00183">
    <property type="entry name" value="HSP90"/>
    <property type="match status" value="1"/>
</dbReference>
<dbReference type="PIRSF" id="PIRSF002583">
    <property type="entry name" value="Hsp90"/>
    <property type="match status" value="1"/>
</dbReference>
<dbReference type="PRINTS" id="PR00775">
    <property type="entry name" value="HEATSHOCK90"/>
</dbReference>
<dbReference type="SMART" id="SM00387">
    <property type="entry name" value="HATPase_c"/>
    <property type="match status" value="1"/>
</dbReference>
<dbReference type="SUPFAM" id="SSF55874">
    <property type="entry name" value="ATPase domain of HSP90 chaperone/DNA topoisomerase II/histidine kinase"/>
    <property type="match status" value="1"/>
</dbReference>
<dbReference type="SUPFAM" id="SSF110942">
    <property type="entry name" value="HSP90 C-terminal domain"/>
    <property type="match status" value="1"/>
</dbReference>
<dbReference type="SUPFAM" id="SSF54211">
    <property type="entry name" value="Ribosomal protein S5 domain 2-like"/>
    <property type="match status" value="1"/>
</dbReference>
<dbReference type="PROSITE" id="PS00298">
    <property type="entry name" value="HSP90"/>
    <property type="match status" value="1"/>
</dbReference>
<name>HTPG_YERPP</name>
<accession>A4TPA5</accession>
<gene>
    <name evidence="1" type="primary">htpG</name>
    <name type="ordered locus">YPDSF_2755</name>
</gene>
<proteinExistence type="inferred from homology"/>
<protein>
    <recommendedName>
        <fullName evidence="1">Chaperone protein HtpG</fullName>
    </recommendedName>
    <alternativeName>
        <fullName evidence="1">Heat shock protein HtpG</fullName>
    </alternativeName>
    <alternativeName>
        <fullName evidence="1">High temperature protein G</fullName>
    </alternativeName>
</protein>
<evidence type="ECO:0000255" key="1">
    <source>
        <dbReference type="HAMAP-Rule" id="MF_00505"/>
    </source>
</evidence>
<sequence>MNMKGQETRGFQSEVKQLLHLMIHSLYSNKEIFLRELISNASDAADKLRFRALSNPELFEGDGELRVRLSFDKEKRTLTLSDNGIGMTRDEVIDNLGTIAKSGTKAFLESIGSDQAKDSQLIGQFGVGFYSAFIVADKVTVRTRAAGAPADTGVFWESAGEGDYTIADITKDERGTEITLHLREGEDEYLDDWRLRSVISKYSDHIALPVEIQVKNEEDGTVTWEKINKAQALWTRGKAEISDDEYKAFYKHIAHDFTDPLSWSHNRVEGKQEYTSLLYIPAQAPWDMWNRDHKHGLKLYVQRVFIMDEAEQFMPNYLRFVRGLIDSNDLPLNVSREILQDSRITQNLRSALTKRVLQMLEKLAKDDAEKYQQFWQQFGMALKEGPAEDGSNKETIAKLLRFASTHTDSSAQTVSLEDYVSRMAEGQEKIYYITADSYAAAKSSPHLELFRKKGIEVLLLSDRIDEWMMSYLTEFEGKAFQSVSKADDSLNKLADEENPEQQEAEKALEPFVERVKTLLGERVKDVRLTHRLTDTPAIVTTDADEMSTQMAKLFAAAGQQAPEVKYIFELNPDHGLVKRAAEVTDDTQFAQWVELLLDQALLAERGTLEDPNQFIRRMNQLLTA</sequence>
<organism>
    <name type="scientific">Yersinia pestis (strain Pestoides F)</name>
    <dbReference type="NCBI Taxonomy" id="386656"/>
    <lineage>
        <taxon>Bacteria</taxon>
        <taxon>Pseudomonadati</taxon>
        <taxon>Pseudomonadota</taxon>
        <taxon>Gammaproteobacteria</taxon>
        <taxon>Enterobacterales</taxon>
        <taxon>Yersiniaceae</taxon>
        <taxon>Yersinia</taxon>
    </lineage>
</organism>
<keyword id="KW-0067">ATP-binding</keyword>
<keyword id="KW-0143">Chaperone</keyword>
<keyword id="KW-0963">Cytoplasm</keyword>
<keyword id="KW-0547">Nucleotide-binding</keyword>
<keyword id="KW-0346">Stress response</keyword>
<feature type="chain" id="PRO_1000014966" description="Chaperone protein HtpG">
    <location>
        <begin position="1"/>
        <end position="624"/>
    </location>
</feature>
<feature type="region of interest" description="A; substrate-binding" evidence="1">
    <location>
        <begin position="1"/>
        <end position="336"/>
    </location>
</feature>
<feature type="region of interest" description="B" evidence="1">
    <location>
        <begin position="337"/>
        <end position="552"/>
    </location>
</feature>
<feature type="region of interest" description="C" evidence="1">
    <location>
        <begin position="553"/>
        <end position="624"/>
    </location>
</feature>
<reference key="1">
    <citation type="submission" date="2007-02" db="EMBL/GenBank/DDBJ databases">
        <title>Complete sequence of chromosome of Yersinia pestis Pestoides F.</title>
        <authorList>
            <consortium name="US DOE Joint Genome Institute"/>
            <person name="Copeland A."/>
            <person name="Lucas S."/>
            <person name="Lapidus A."/>
            <person name="Barry K."/>
            <person name="Detter J.C."/>
            <person name="Glavina del Rio T."/>
            <person name="Hammon N."/>
            <person name="Israni S."/>
            <person name="Dalin E."/>
            <person name="Tice H."/>
            <person name="Pitluck S."/>
            <person name="Di Bartolo G."/>
            <person name="Chain P."/>
            <person name="Malfatti S."/>
            <person name="Shin M."/>
            <person name="Vergez L."/>
            <person name="Schmutz J."/>
            <person name="Larimer F."/>
            <person name="Land M."/>
            <person name="Hauser L."/>
            <person name="Worsham P."/>
            <person name="Chu M."/>
            <person name="Bearden S."/>
            <person name="Garcia E."/>
            <person name="Richardson P."/>
        </authorList>
    </citation>
    <scope>NUCLEOTIDE SEQUENCE [LARGE SCALE GENOMIC DNA]</scope>
    <source>
        <strain>Pestoides F</strain>
    </source>
</reference>